<feature type="signal peptide" evidence="1">
    <location>
        <begin position="1"/>
        <end position="19"/>
    </location>
</feature>
<feature type="chain" id="PRO_1000186102" description="Penicillin-insensitive murein endopeptidase">
    <location>
        <begin position="20"/>
        <end position="274"/>
    </location>
</feature>
<feature type="region of interest" description="Disordered" evidence="2">
    <location>
        <begin position="227"/>
        <end position="274"/>
    </location>
</feature>
<feature type="binding site" evidence="1">
    <location>
        <position position="110"/>
    </location>
    <ligand>
        <name>Zn(2+)</name>
        <dbReference type="ChEBI" id="CHEBI:29105"/>
        <label>1</label>
    </ligand>
</feature>
<feature type="binding site" evidence="1">
    <location>
        <position position="113"/>
    </location>
    <ligand>
        <name>Zn(2+)</name>
        <dbReference type="ChEBI" id="CHEBI:29105"/>
        <label>1</label>
    </ligand>
</feature>
<feature type="binding site" evidence="1">
    <location>
        <position position="120"/>
    </location>
    <ligand>
        <name>Zn(2+)</name>
        <dbReference type="ChEBI" id="CHEBI:29105"/>
        <label>1</label>
    </ligand>
</feature>
<feature type="binding site" evidence="1">
    <location>
        <position position="147"/>
    </location>
    <ligand>
        <name>Zn(2+)</name>
        <dbReference type="ChEBI" id="CHEBI:29105"/>
        <label>2</label>
    </ligand>
</feature>
<feature type="binding site" evidence="1">
    <location>
        <position position="150"/>
    </location>
    <ligand>
        <name>Zn(2+)</name>
        <dbReference type="ChEBI" id="CHEBI:29105"/>
        <label>2</label>
    </ligand>
</feature>
<feature type="binding site" evidence="1">
    <location>
        <position position="211"/>
    </location>
    <ligand>
        <name>Zn(2+)</name>
        <dbReference type="ChEBI" id="CHEBI:29105"/>
        <label>1</label>
    </ligand>
</feature>
<feature type="disulfide bond" evidence="1">
    <location>
        <begin position="44"/>
        <end position="265"/>
    </location>
</feature>
<feature type="disulfide bond" evidence="1">
    <location>
        <begin position="187"/>
        <end position="235"/>
    </location>
</feature>
<feature type="disulfide bond" evidence="1">
    <location>
        <begin position="216"/>
        <end position="223"/>
    </location>
</feature>
<proteinExistence type="inferred from homology"/>
<dbReference type="EC" id="3.4.24.-" evidence="1"/>
<dbReference type="EMBL" id="CP000970">
    <property type="protein sequence ID" value="ACB15898.1"/>
    <property type="molecule type" value="Genomic_DNA"/>
</dbReference>
<dbReference type="RefSeq" id="WP_001043802.1">
    <property type="nucleotide sequence ID" value="NC_010498.1"/>
</dbReference>
<dbReference type="SMR" id="B1LLT4"/>
<dbReference type="MEROPS" id="M74.001"/>
<dbReference type="KEGG" id="ecm:EcSMS35_2485"/>
<dbReference type="HOGENOM" id="CLU_052496_0_0_6"/>
<dbReference type="Proteomes" id="UP000007011">
    <property type="component" value="Chromosome"/>
</dbReference>
<dbReference type="GO" id="GO:0030288">
    <property type="term" value="C:outer membrane-bounded periplasmic space"/>
    <property type="evidence" value="ECO:0007669"/>
    <property type="project" value="InterPro"/>
</dbReference>
<dbReference type="GO" id="GO:0046872">
    <property type="term" value="F:metal ion binding"/>
    <property type="evidence" value="ECO:0007669"/>
    <property type="project" value="UniProtKB-KW"/>
</dbReference>
<dbReference type="GO" id="GO:0004222">
    <property type="term" value="F:metalloendopeptidase activity"/>
    <property type="evidence" value="ECO:0007669"/>
    <property type="project" value="UniProtKB-UniRule"/>
</dbReference>
<dbReference type="GO" id="GO:0004252">
    <property type="term" value="F:serine-type endopeptidase activity"/>
    <property type="evidence" value="ECO:0007669"/>
    <property type="project" value="InterPro"/>
</dbReference>
<dbReference type="GO" id="GO:0000270">
    <property type="term" value="P:peptidoglycan metabolic process"/>
    <property type="evidence" value="ECO:0007669"/>
    <property type="project" value="UniProtKB-UniRule"/>
</dbReference>
<dbReference type="GO" id="GO:0006508">
    <property type="term" value="P:proteolysis"/>
    <property type="evidence" value="ECO:0007669"/>
    <property type="project" value="UniProtKB-KW"/>
</dbReference>
<dbReference type="FunFam" id="3.30.1380.10:FF:000002">
    <property type="entry name" value="Penicillin-insensitive murein endopeptidase"/>
    <property type="match status" value="1"/>
</dbReference>
<dbReference type="Gene3D" id="3.30.1380.10">
    <property type="match status" value="1"/>
</dbReference>
<dbReference type="HAMAP" id="MF_01623">
    <property type="entry name" value="MepA"/>
    <property type="match status" value="1"/>
</dbReference>
<dbReference type="InterPro" id="IPR009045">
    <property type="entry name" value="Hedgehog_sig/DD-Pept_Zn-bd_sf"/>
</dbReference>
<dbReference type="InterPro" id="IPR005073">
    <property type="entry name" value="Peptidase_M74"/>
</dbReference>
<dbReference type="NCBIfam" id="NF006947">
    <property type="entry name" value="PRK09429.1"/>
    <property type="match status" value="1"/>
</dbReference>
<dbReference type="Pfam" id="PF03411">
    <property type="entry name" value="Peptidase_M74"/>
    <property type="match status" value="1"/>
</dbReference>
<dbReference type="PIRSF" id="PIRSF018455">
    <property type="entry name" value="MepA"/>
    <property type="match status" value="1"/>
</dbReference>
<dbReference type="SUPFAM" id="SSF55166">
    <property type="entry name" value="Hedgehog/DD-peptidase"/>
    <property type="match status" value="1"/>
</dbReference>
<sequence>MNKTAIALLALLASSASLAATPWQKITQPVPGSAQSIGSFSNGCIVGADTLPIQSEHYQVMRTDQRRYFGHPDLVMFIQRLSRQVSNLGMGTVLIGDMGMPAGGRFNGGHASHQTGLDVDIFLQLPKTRWTSAQLLRPQALDLVSRDGKHVVPALWKPEIFSLIKLAAQDKDVTRIFVNPAIKQQLCLDAGTDRDWLRKVRPWFQHRAHMHVRLRCPADSLECEDQPLPPPGDGCGAELQSWFEPPKPGTTKPEKKTPPPLPPSCQALLDEHVI</sequence>
<reference key="1">
    <citation type="journal article" date="2008" name="J. Bacteriol.">
        <title>Insights into the environmental resistance gene pool from the genome sequence of the multidrug-resistant environmental isolate Escherichia coli SMS-3-5.</title>
        <authorList>
            <person name="Fricke W.F."/>
            <person name="Wright M.S."/>
            <person name="Lindell A.H."/>
            <person name="Harkins D.M."/>
            <person name="Baker-Austin C."/>
            <person name="Ravel J."/>
            <person name="Stepanauskas R."/>
        </authorList>
    </citation>
    <scope>NUCLEOTIDE SEQUENCE [LARGE SCALE GENOMIC DNA]</scope>
    <source>
        <strain>SMS-3-5 / SECEC</strain>
    </source>
</reference>
<accession>B1LLT4</accession>
<evidence type="ECO:0000255" key="1">
    <source>
        <dbReference type="HAMAP-Rule" id="MF_01623"/>
    </source>
</evidence>
<evidence type="ECO:0000256" key="2">
    <source>
        <dbReference type="SAM" id="MobiDB-lite"/>
    </source>
</evidence>
<comment type="function">
    <text evidence="1">Murein endopeptidase that cleaves the D-alanyl-meso-2,6-diamino-pimelyl amide bond that connects peptidoglycan strands. Likely plays a role in the removal of murein from the sacculus.</text>
</comment>
<comment type="cofactor">
    <cofactor evidence="1">
        <name>Zn(2+)</name>
        <dbReference type="ChEBI" id="CHEBI:29105"/>
    </cofactor>
    <text evidence="1">Binds 2 Zn(2+) ions per subunit. Zn(2+) ion 1 is bound in the active site. Zn(2+) ion 2 is bound at the dimer interface by residues from both subunits.</text>
</comment>
<comment type="subunit">
    <text evidence="1">Dimer.</text>
</comment>
<comment type="subcellular location">
    <subcellularLocation>
        <location evidence="1">Periplasm</location>
    </subcellularLocation>
</comment>
<comment type="similarity">
    <text evidence="1">Belongs to the peptidase M74 family.</text>
</comment>
<organism>
    <name type="scientific">Escherichia coli (strain SMS-3-5 / SECEC)</name>
    <dbReference type="NCBI Taxonomy" id="439855"/>
    <lineage>
        <taxon>Bacteria</taxon>
        <taxon>Pseudomonadati</taxon>
        <taxon>Pseudomonadota</taxon>
        <taxon>Gammaproteobacteria</taxon>
        <taxon>Enterobacterales</taxon>
        <taxon>Enterobacteriaceae</taxon>
        <taxon>Escherichia</taxon>
    </lineage>
</organism>
<protein>
    <recommendedName>
        <fullName evidence="1">Penicillin-insensitive murein endopeptidase</fullName>
        <ecNumber evidence="1">3.4.24.-</ecNumber>
    </recommendedName>
    <alternativeName>
        <fullName evidence="1">D-alanyl-D-alanine-endopeptidase</fullName>
        <shortName evidence="1">DD-endopeptidase</shortName>
    </alternativeName>
</protein>
<keyword id="KW-1015">Disulfide bond</keyword>
<keyword id="KW-0378">Hydrolase</keyword>
<keyword id="KW-0479">Metal-binding</keyword>
<keyword id="KW-0482">Metalloprotease</keyword>
<keyword id="KW-0574">Periplasm</keyword>
<keyword id="KW-0645">Protease</keyword>
<keyword id="KW-0732">Signal</keyword>
<keyword id="KW-0862">Zinc</keyword>
<gene>
    <name evidence="1" type="primary">mepA</name>
    <name type="ordered locus">EcSMS35_2485</name>
</gene>
<name>MEPA_ECOSM</name>